<comment type="function">
    <text evidence="1">Increases the formation of ribosomal termination complexes and stimulates activities of RF-1 and RF-2. It binds guanine nucleotides and has strong preference for UGA stop codons. It may interact directly with the ribosome. The stimulation of RF-1 and RF-2 is significantly reduced by GTP and GDP, but not by GMP.</text>
</comment>
<comment type="subcellular location">
    <subcellularLocation>
        <location evidence="1">Cytoplasm</location>
    </subcellularLocation>
</comment>
<comment type="similarity">
    <text evidence="1">Belongs to the TRAFAC class translation factor GTPase superfamily. Classic translation factor GTPase family. PrfC subfamily.</text>
</comment>
<reference key="1">
    <citation type="journal article" date="2006" name="Proc. Natl. Acad. Sci. U.S.A.">
        <title>Comparative genomics of the lactic acid bacteria.</title>
        <authorList>
            <person name="Makarova K.S."/>
            <person name="Slesarev A."/>
            <person name="Wolf Y.I."/>
            <person name="Sorokin A."/>
            <person name="Mirkin B."/>
            <person name="Koonin E.V."/>
            <person name="Pavlov A."/>
            <person name="Pavlova N."/>
            <person name="Karamychev V."/>
            <person name="Polouchine N."/>
            <person name="Shakhova V."/>
            <person name="Grigoriev I."/>
            <person name="Lou Y."/>
            <person name="Rohksar D."/>
            <person name="Lucas S."/>
            <person name="Huang K."/>
            <person name="Goodstein D.M."/>
            <person name="Hawkins T."/>
            <person name="Plengvidhya V."/>
            <person name="Welker D."/>
            <person name="Hughes J."/>
            <person name="Goh Y."/>
            <person name="Benson A."/>
            <person name="Baldwin K."/>
            <person name="Lee J.-H."/>
            <person name="Diaz-Muniz I."/>
            <person name="Dosti B."/>
            <person name="Smeianov V."/>
            <person name="Wechter W."/>
            <person name="Barabote R."/>
            <person name="Lorca G."/>
            <person name="Altermann E."/>
            <person name="Barrangou R."/>
            <person name="Ganesan B."/>
            <person name="Xie Y."/>
            <person name="Rawsthorne H."/>
            <person name="Tamir D."/>
            <person name="Parker C."/>
            <person name="Breidt F."/>
            <person name="Broadbent J.R."/>
            <person name="Hutkins R."/>
            <person name="O'Sullivan D."/>
            <person name="Steele J."/>
            <person name="Unlu G."/>
            <person name="Saier M.H. Jr."/>
            <person name="Klaenhammer T."/>
            <person name="Richardson P."/>
            <person name="Kozyavkin S."/>
            <person name="Weimer B.C."/>
            <person name="Mills D.A."/>
        </authorList>
    </citation>
    <scope>NUCLEOTIDE SEQUENCE [LARGE SCALE GENOMIC DNA]</scope>
    <source>
        <strain>ATCC 367 / BCRC 12310 / CIP 105137 / JCM 1170 / LMG 11437 / NCIMB 947 / NCTC 947</strain>
    </source>
</reference>
<keyword id="KW-0963">Cytoplasm</keyword>
<keyword id="KW-0342">GTP-binding</keyword>
<keyword id="KW-0547">Nucleotide-binding</keyword>
<keyword id="KW-0648">Protein biosynthesis</keyword>
<keyword id="KW-1185">Reference proteome</keyword>
<gene>
    <name evidence="1" type="primary">prfC</name>
    <name type="ordered locus">LVIS_1561</name>
</gene>
<organism>
    <name type="scientific">Levilactobacillus brevis (strain ATCC 367 / BCRC 12310 / CIP 105137 / JCM 1170 / LMG 11437 / NCIMB 947 / NCTC 947)</name>
    <name type="common">Lactobacillus brevis</name>
    <dbReference type="NCBI Taxonomy" id="387344"/>
    <lineage>
        <taxon>Bacteria</taxon>
        <taxon>Bacillati</taxon>
        <taxon>Bacillota</taxon>
        <taxon>Bacilli</taxon>
        <taxon>Lactobacillales</taxon>
        <taxon>Lactobacillaceae</taxon>
        <taxon>Levilactobacillus</taxon>
    </lineage>
</organism>
<sequence>MSEKTLATAVDKRRTFAIISHPDAGKTTITEQLLLFGGVVREAGTVKARKSGNFAKSDWMEIEQKRGISVTSSVMQFDYQGKRINILDTPGHEDFSEDTYRTLMAVDSAVMVIDSAKGIEPQTKKLFQICKMRGIPIFTFMNKLDRDGREPLDLIAELEDVLGIEGYPMNWPIGMGKELKGLYDRYHQRVALFRPEDDAHQYLPLNADGDLATANELEEDGLYQEARDNMLLIEEAGNQFDAAKIASGDQTPVFFGSALANFGVKTFLETYLEYAPQPASHQTPDGATVAPTDPEFSGFVFKIQANMNPNHRDRIAFVRICSGEFERGMDVIQERTGKKMRLSNVTEFMADTRENVETAVAGDIIGLYDTGNFQIGDAIYTGKTKIKFEKLPQFTPELFVRVAAKNVMKQKSFHKGINQLVQEGAVQLYTSYSTGDYILGAVGQLQFEVFQFRMQNEYNSEVIMEPMGKKTARWINPDQLDERMSSSRNLLVKDSQGAPLFLFENRFAERWFQDKYPDVELTAKL</sequence>
<accession>Q03Q83</accession>
<feature type="chain" id="PRO_1000023653" description="Peptide chain release factor 3">
    <location>
        <begin position="1"/>
        <end position="525"/>
    </location>
</feature>
<feature type="domain" description="tr-type G">
    <location>
        <begin position="11"/>
        <end position="279"/>
    </location>
</feature>
<feature type="binding site" evidence="1">
    <location>
        <begin position="20"/>
        <end position="27"/>
    </location>
    <ligand>
        <name>GTP</name>
        <dbReference type="ChEBI" id="CHEBI:37565"/>
    </ligand>
</feature>
<feature type="binding site" evidence="1">
    <location>
        <begin position="88"/>
        <end position="92"/>
    </location>
    <ligand>
        <name>GTP</name>
        <dbReference type="ChEBI" id="CHEBI:37565"/>
    </ligand>
</feature>
<feature type="binding site" evidence="1">
    <location>
        <begin position="142"/>
        <end position="145"/>
    </location>
    <ligand>
        <name>GTP</name>
        <dbReference type="ChEBI" id="CHEBI:37565"/>
    </ligand>
</feature>
<evidence type="ECO:0000255" key="1">
    <source>
        <dbReference type="HAMAP-Rule" id="MF_00072"/>
    </source>
</evidence>
<dbReference type="EMBL" id="CP000416">
    <property type="protein sequence ID" value="ABJ64639.1"/>
    <property type="molecule type" value="Genomic_DNA"/>
</dbReference>
<dbReference type="RefSeq" id="WP_011668265.1">
    <property type="nucleotide sequence ID" value="NC_008497.1"/>
</dbReference>
<dbReference type="SMR" id="Q03Q83"/>
<dbReference type="STRING" id="387344.LVIS_1561"/>
<dbReference type="KEGG" id="lbr:LVIS_1561"/>
<dbReference type="eggNOG" id="COG4108">
    <property type="taxonomic scope" value="Bacteria"/>
</dbReference>
<dbReference type="HOGENOM" id="CLU_002794_2_1_9"/>
<dbReference type="Proteomes" id="UP000001652">
    <property type="component" value="Chromosome"/>
</dbReference>
<dbReference type="GO" id="GO:0005829">
    <property type="term" value="C:cytosol"/>
    <property type="evidence" value="ECO:0007669"/>
    <property type="project" value="TreeGrafter"/>
</dbReference>
<dbReference type="GO" id="GO:0005525">
    <property type="term" value="F:GTP binding"/>
    <property type="evidence" value="ECO:0007669"/>
    <property type="project" value="UniProtKB-UniRule"/>
</dbReference>
<dbReference type="GO" id="GO:0003924">
    <property type="term" value="F:GTPase activity"/>
    <property type="evidence" value="ECO:0007669"/>
    <property type="project" value="InterPro"/>
</dbReference>
<dbReference type="GO" id="GO:0016150">
    <property type="term" value="F:translation release factor activity, codon nonspecific"/>
    <property type="evidence" value="ECO:0007669"/>
    <property type="project" value="TreeGrafter"/>
</dbReference>
<dbReference type="GO" id="GO:0016149">
    <property type="term" value="F:translation release factor activity, codon specific"/>
    <property type="evidence" value="ECO:0007669"/>
    <property type="project" value="UniProtKB-UniRule"/>
</dbReference>
<dbReference type="GO" id="GO:0006449">
    <property type="term" value="P:regulation of translational termination"/>
    <property type="evidence" value="ECO:0007669"/>
    <property type="project" value="UniProtKB-UniRule"/>
</dbReference>
<dbReference type="CDD" id="cd04169">
    <property type="entry name" value="RF3"/>
    <property type="match status" value="1"/>
</dbReference>
<dbReference type="CDD" id="cd03689">
    <property type="entry name" value="RF3_II"/>
    <property type="match status" value="1"/>
</dbReference>
<dbReference type="CDD" id="cd16259">
    <property type="entry name" value="RF3_III"/>
    <property type="match status" value="1"/>
</dbReference>
<dbReference type="FunFam" id="2.40.30.10:FF:000040">
    <property type="entry name" value="Peptide chain release factor 3"/>
    <property type="match status" value="1"/>
</dbReference>
<dbReference type="FunFam" id="3.30.70.3280:FF:000001">
    <property type="entry name" value="Peptide chain release factor 3"/>
    <property type="match status" value="1"/>
</dbReference>
<dbReference type="FunFam" id="3.40.50.300:FF:000542">
    <property type="entry name" value="Peptide chain release factor 3"/>
    <property type="match status" value="1"/>
</dbReference>
<dbReference type="Gene3D" id="3.40.50.300">
    <property type="entry name" value="P-loop containing nucleotide triphosphate hydrolases"/>
    <property type="match status" value="1"/>
</dbReference>
<dbReference type="Gene3D" id="3.30.70.3280">
    <property type="entry name" value="Peptide chain release factor 3, domain III"/>
    <property type="match status" value="1"/>
</dbReference>
<dbReference type="Gene3D" id="2.40.30.10">
    <property type="entry name" value="Translation factors"/>
    <property type="match status" value="1"/>
</dbReference>
<dbReference type="HAMAP" id="MF_00072">
    <property type="entry name" value="Rel_fac_3"/>
    <property type="match status" value="1"/>
</dbReference>
<dbReference type="InterPro" id="IPR053905">
    <property type="entry name" value="EF-G-like_DII"/>
</dbReference>
<dbReference type="InterPro" id="IPR035647">
    <property type="entry name" value="EFG_III/V"/>
</dbReference>
<dbReference type="InterPro" id="IPR031157">
    <property type="entry name" value="G_TR_CS"/>
</dbReference>
<dbReference type="InterPro" id="IPR027417">
    <property type="entry name" value="P-loop_NTPase"/>
</dbReference>
<dbReference type="InterPro" id="IPR004548">
    <property type="entry name" value="PrfC"/>
</dbReference>
<dbReference type="InterPro" id="IPR032090">
    <property type="entry name" value="RF3_C"/>
</dbReference>
<dbReference type="InterPro" id="IPR038467">
    <property type="entry name" value="RF3_dom_3_sf"/>
</dbReference>
<dbReference type="InterPro" id="IPR041732">
    <property type="entry name" value="RF3_GTP-bd"/>
</dbReference>
<dbReference type="InterPro" id="IPR005225">
    <property type="entry name" value="Small_GTP-bd"/>
</dbReference>
<dbReference type="InterPro" id="IPR000795">
    <property type="entry name" value="T_Tr_GTP-bd_dom"/>
</dbReference>
<dbReference type="InterPro" id="IPR009000">
    <property type="entry name" value="Transl_B-barrel_sf"/>
</dbReference>
<dbReference type="NCBIfam" id="TIGR00503">
    <property type="entry name" value="prfC"/>
    <property type="match status" value="1"/>
</dbReference>
<dbReference type="NCBIfam" id="NF001964">
    <property type="entry name" value="PRK00741.1"/>
    <property type="match status" value="1"/>
</dbReference>
<dbReference type="NCBIfam" id="TIGR00231">
    <property type="entry name" value="small_GTP"/>
    <property type="match status" value="1"/>
</dbReference>
<dbReference type="PANTHER" id="PTHR43556">
    <property type="entry name" value="PEPTIDE CHAIN RELEASE FACTOR RF3"/>
    <property type="match status" value="1"/>
</dbReference>
<dbReference type="PANTHER" id="PTHR43556:SF2">
    <property type="entry name" value="PEPTIDE CHAIN RELEASE FACTOR RF3"/>
    <property type="match status" value="1"/>
</dbReference>
<dbReference type="Pfam" id="PF22042">
    <property type="entry name" value="EF-G_D2"/>
    <property type="match status" value="1"/>
</dbReference>
<dbReference type="Pfam" id="PF00009">
    <property type="entry name" value="GTP_EFTU"/>
    <property type="match status" value="1"/>
</dbReference>
<dbReference type="Pfam" id="PF16658">
    <property type="entry name" value="RF3_C"/>
    <property type="match status" value="1"/>
</dbReference>
<dbReference type="PRINTS" id="PR00315">
    <property type="entry name" value="ELONGATNFCT"/>
</dbReference>
<dbReference type="SUPFAM" id="SSF54980">
    <property type="entry name" value="EF-G C-terminal domain-like"/>
    <property type="match status" value="1"/>
</dbReference>
<dbReference type="SUPFAM" id="SSF52540">
    <property type="entry name" value="P-loop containing nucleoside triphosphate hydrolases"/>
    <property type="match status" value="1"/>
</dbReference>
<dbReference type="SUPFAM" id="SSF50447">
    <property type="entry name" value="Translation proteins"/>
    <property type="match status" value="1"/>
</dbReference>
<dbReference type="PROSITE" id="PS00301">
    <property type="entry name" value="G_TR_1"/>
    <property type="match status" value="1"/>
</dbReference>
<dbReference type="PROSITE" id="PS51722">
    <property type="entry name" value="G_TR_2"/>
    <property type="match status" value="1"/>
</dbReference>
<name>RF3_LEVBA</name>
<proteinExistence type="inferred from homology"/>
<protein>
    <recommendedName>
        <fullName evidence="1">Peptide chain release factor 3</fullName>
        <shortName evidence="1">RF-3</shortName>
    </recommendedName>
</protein>